<sequence>MSGGYTSLESSIRTCKVNTGNADRIESDRFLGFPDKKTCPPFLGTDLTGRAICPDSFMTKSAGCNTPEDRIYIENTVSRPHYYEYINLSPRGMLNDETIEGFGFGQQESAYIREGFGTNGTSAQYGSNGNGGNGSCGLNNYRAPVNLNGWPRAGYGIGPEDIDDLPGDLRFNATQPGPFNNMPLWAFSVVPREYGMPYSQLYGQNAEDQRLKQALWARAEIMGQDPIVPGPSRYGYRMMGDY</sequence>
<accession>Q91FB0</accession>
<feature type="chain" id="PRO_0000377885" description="Uncharacterized protein 415R">
    <location>
        <begin position="1"/>
        <end position="242"/>
    </location>
</feature>
<proteinExistence type="inferred from homology"/>
<comment type="similarity">
    <text evidence="1">Belongs to the IIV-6 415R family.</text>
</comment>
<keyword id="KW-1185">Reference proteome</keyword>
<gene>
    <name type="ORF">IIV6-415R</name>
</gene>
<dbReference type="EMBL" id="AF303741">
    <property type="protein sequence ID" value="AAK82275.1"/>
    <property type="molecule type" value="Genomic_DNA"/>
</dbReference>
<dbReference type="RefSeq" id="NP_149878.1">
    <property type="nucleotide sequence ID" value="NC_003038.1"/>
</dbReference>
<dbReference type="KEGG" id="vg:1733400"/>
<dbReference type="OrthoDB" id="20508at10239"/>
<dbReference type="Proteomes" id="UP000001359">
    <property type="component" value="Genome"/>
</dbReference>
<name>VF415_IIV6</name>
<organism>
    <name type="scientific">Invertebrate iridescent virus 6</name>
    <name type="common">IIV-6</name>
    <name type="synonym">Chilo iridescent virus</name>
    <dbReference type="NCBI Taxonomy" id="176652"/>
    <lineage>
        <taxon>Viruses</taxon>
        <taxon>Varidnaviria</taxon>
        <taxon>Bamfordvirae</taxon>
        <taxon>Nucleocytoviricota</taxon>
        <taxon>Megaviricetes</taxon>
        <taxon>Pimascovirales</taxon>
        <taxon>Iridoviridae</taxon>
        <taxon>Betairidovirinae</taxon>
        <taxon>Iridovirus</taxon>
    </lineage>
</organism>
<protein>
    <recommendedName>
        <fullName>Uncharacterized protein 415R</fullName>
    </recommendedName>
</protein>
<organismHost>
    <name type="scientific">Acheta domesticus</name>
    <name type="common">House cricket</name>
    <dbReference type="NCBI Taxonomy" id="6997"/>
</organismHost>
<organismHost>
    <name type="scientific">Chilo suppressalis</name>
    <name type="common">Asiatic rice borer moth</name>
    <dbReference type="NCBI Taxonomy" id="168631"/>
</organismHost>
<organismHost>
    <name type="scientific">Gryllus bimaculatus</name>
    <name type="common">Two-spotted cricket</name>
    <dbReference type="NCBI Taxonomy" id="6999"/>
</organismHost>
<organismHost>
    <name type="scientific">Gryllus campestris</name>
    <dbReference type="NCBI Taxonomy" id="58607"/>
</organismHost>
<organismHost>
    <name type="scientific">Spodoptera frugiperda</name>
    <name type="common">Fall armyworm</name>
    <dbReference type="NCBI Taxonomy" id="7108"/>
</organismHost>
<reference key="1">
    <citation type="journal article" date="2001" name="Virology">
        <title>Analysis of the first complete DNA sequence of an invertebrate iridovirus: coding strategy of the genome of Chilo iridescent virus.</title>
        <authorList>
            <person name="Jakob N.J."/>
            <person name="Mueller K."/>
            <person name="Bahr U."/>
            <person name="Darai G."/>
        </authorList>
    </citation>
    <scope>NUCLEOTIDE SEQUENCE [LARGE SCALE GENOMIC DNA]</scope>
</reference>
<reference key="2">
    <citation type="journal article" date="2007" name="Virol. J.">
        <title>Comparative genomic analysis of the family Iridoviridae: re-annotating and defining the core set of iridovirus genes.</title>
        <authorList>
            <person name="Eaton H.E."/>
            <person name="Metcalf J."/>
            <person name="Penny E."/>
            <person name="Tcherepanov V."/>
            <person name="Upton C."/>
            <person name="Brunetti C.R."/>
        </authorList>
    </citation>
    <scope>GENOME REANNOTATION</scope>
</reference>
<evidence type="ECO:0000305" key="1"/>